<protein>
    <recommendedName>
        <fullName>CAP-Gly domain-containing linker protein 2</fullName>
    </recommendedName>
    <alternativeName>
        <fullName>Cytoplasmic linker protein 115</fullName>
        <shortName>CLIP-115</shortName>
    </alternativeName>
    <alternativeName>
        <fullName>Cytoplasmic linker protein 2</fullName>
    </alternativeName>
    <alternativeName>
        <fullName>Williams-Beuren syndrome chromosomal region 3 protein</fullName>
    </alternativeName>
    <alternativeName>
        <fullName>Williams-Beuren syndrome chromosomal region 4 protein</fullName>
    </alternativeName>
</protein>
<comment type="function">
    <text evidence="1">Seems to link microtubules to dendritic lamellar body (DLB), a membranous organelle predominantly present in bulbous dendritic appendages of neurons linked by dendrodendritic gap junctions. May operate in the control of brain-specific organelle translocations (By similarity).</text>
</comment>
<comment type="subunit">
    <text evidence="3 7">Interacts with CLASP1 and CLASP2 (PubMed:11290329). Binds preferentially to tyrosinated microtubules, and only marginally to detyrosinated microtubules (By similarity).</text>
</comment>
<comment type="subcellular location">
    <subcellularLocation>
        <location evidence="2">Cytoplasm</location>
    </subcellularLocation>
    <subcellularLocation>
        <location evidence="3">Cytoplasm</location>
        <location evidence="3">Cytoskeleton</location>
    </subcellularLocation>
    <text evidence="3">Localizes preferentially to the ends of tyrosinated microtubules.</text>
</comment>
<comment type="alternative products">
    <event type="alternative splicing"/>
    <isoform>
        <id>Q9UDT6-1</id>
        <name>1</name>
        <sequence type="displayed"/>
    </isoform>
    <isoform>
        <id>Q9UDT6-2</id>
        <name>2</name>
        <sequence type="described" ref="VSP_015682"/>
    </isoform>
</comment>
<comment type="disease">
    <text evidence="11 12">CLIP2 is located in the Williams-Beuren syndrome (WBS) critical region (PubMed:9799601). WBS results from a hemizygous deletion of several genes on chromosome 7q11.23, thought to arise as a consequence of unequal crossing over between highly homologous low-copy repeat sequences flanking the deleted region. Haploinsufficiency of CLIP2 may be the cause of certain cardiovascular and musculo-skeletal abnormalities observed in the disease. However, it has been demonstrated that haploinsufficiency of this gene alone is not sufficient to cause any of the cognitive or facial features of WBS (PubMed:22608712).</text>
</comment>
<comment type="sequence caution" evidence="10">
    <conflict type="erroneous initiation">
        <sequence resource="EMBL-CDS" id="BAA22960"/>
    </conflict>
</comment>
<dbReference type="EMBL" id="AB006629">
    <property type="protein sequence ID" value="BAA22960.2"/>
    <property type="status" value="ALT_INIT"/>
    <property type="molecule type" value="mRNA"/>
</dbReference>
<dbReference type="EMBL" id="AC005015">
    <property type="protein sequence ID" value="AAF03524.1"/>
    <property type="molecule type" value="Genomic_DNA"/>
</dbReference>
<dbReference type="EMBL" id="AF041059">
    <property type="protein sequence ID" value="AAB96784.1"/>
    <property type="molecule type" value="Genomic_DNA"/>
</dbReference>
<dbReference type="EMBL" id="AF041055">
    <property type="protein sequence ID" value="AAB96784.1"/>
    <property type="status" value="JOINED"/>
    <property type="molecule type" value="Genomic_DNA"/>
</dbReference>
<dbReference type="EMBL" id="AF041056">
    <property type="protein sequence ID" value="AAB96784.1"/>
    <property type="status" value="JOINED"/>
    <property type="molecule type" value="Genomic_DNA"/>
</dbReference>
<dbReference type="EMBL" id="AF041057">
    <property type="protein sequence ID" value="AAB96784.1"/>
    <property type="status" value="JOINED"/>
    <property type="molecule type" value="Genomic_DNA"/>
</dbReference>
<dbReference type="EMBL" id="AF041058">
    <property type="protein sequence ID" value="AAB96784.1"/>
    <property type="status" value="JOINED"/>
    <property type="molecule type" value="Genomic_DNA"/>
</dbReference>
<dbReference type="CCDS" id="CCDS5569.1">
    <molecule id="Q9UDT6-1"/>
</dbReference>
<dbReference type="CCDS" id="CCDS5570.1">
    <molecule id="Q9UDT6-2"/>
</dbReference>
<dbReference type="RefSeq" id="NP_003379.3">
    <molecule id="Q9UDT6-1"/>
    <property type="nucleotide sequence ID" value="NM_003388.4"/>
</dbReference>
<dbReference type="RefSeq" id="NP_115797.2">
    <molecule id="Q9UDT6-2"/>
    <property type="nucleotide sequence ID" value="NM_032421.3"/>
</dbReference>
<dbReference type="PDB" id="2CP2">
    <property type="method" value="NMR"/>
    <property type="chains" value="A=68-149"/>
</dbReference>
<dbReference type="PDB" id="2CP3">
    <property type="method" value="NMR"/>
    <property type="chains" value="A=219-289"/>
</dbReference>
<dbReference type="PDBsum" id="2CP2"/>
<dbReference type="PDBsum" id="2CP3"/>
<dbReference type="SMR" id="Q9UDT6"/>
<dbReference type="BioGRID" id="113300">
    <property type="interactions" value="49"/>
</dbReference>
<dbReference type="FunCoup" id="Q9UDT6">
    <property type="interactions" value="675"/>
</dbReference>
<dbReference type="IntAct" id="Q9UDT6">
    <property type="interactions" value="22"/>
</dbReference>
<dbReference type="MINT" id="Q9UDT6"/>
<dbReference type="STRING" id="9606.ENSP00000223398"/>
<dbReference type="CarbonylDB" id="Q9UDT6"/>
<dbReference type="GlyGen" id="Q9UDT6">
    <property type="glycosylation" value="2 sites, 1 N-linked glycan (1 site), 1 O-linked glycan (1 site)"/>
</dbReference>
<dbReference type="iPTMnet" id="Q9UDT6"/>
<dbReference type="MetOSite" id="Q9UDT6"/>
<dbReference type="PhosphoSitePlus" id="Q9UDT6"/>
<dbReference type="SwissPalm" id="Q9UDT6"/>
<dbReference type="BioMuta" id="CLIP2"/>
<dbReference type="DMDM" id="74753268"/>
<dbReference type="jPOST" id="Q9UDT6"/>
<dbReference type="MassIVE" id="Q9UDT6"/>
<dbReference type="PaxDb" id="9606-ENSP00000223398"/>
<dbReference type="PeptideAtlas" id="Q9UDT6"/>
<dbReference type="ProteomicsDB" id="84116">
    <molecule id="Q9UDT6-1"/>
</dbReference>
<dbReference type="ProteomicsDB" id="84117">
    <molecule id="Q9UDT6-2"/>
</dbReference>
<dbReference type="Pumba" id="Q9UDT6"/>
<dbReference type="Antibodypedia" id="14611">
    <property type="antibodies" value="157 antibodies from 25 providers"/>
</dbReference>
<dbReference type="DNASU" id="7461"/>
<dbReference type="Ensembl" id="ENST00000223398.11">
    <molecule id="Q9UDT6-1"/>
    <property type="protein sequence ID" value="ENSP00000223398.6"/>
    <property type="gene ID" value="ENSG00000106665.16"/>
</dbReference>
<dbReference type="Ensembl" id="ENST00000361545.9">
    <molecule id="Q9UDT6-2"/>
    <property type="protein sequence ID" value="ENSP00000355151.5"/>
    <property type="gene ID" value="ENSG00000106665.16"/>
</dbReference>
<dbReference type="GeneID" id="7461"/>
<dbReference type="KEGG" id="hsa:7461"/>
<dbReference type="MANE-Select" id="ENST00000223398.11">
    <property type="protein sequence ID" value="ENSP00000223398.6"/>
    <property type="RefSeq nucleotide sequence ID" value="NM_003388.5"/>
    <property type="RefSeq protein sequence ID" value="NP_003379.4"/>
</dbReference>
<dbReference type="UCSC" id="uc003uam.3">
    <molecule id="Q9UDT6-1"/>
    <property type="organism name" value="human"/>
</dbReference>
<dbReference type="AGR" id="HGNC:2586"/>
<dbReference type="CTD" id="7461"/>
<dbReference type="DisGeNET" id="7461"/>
<dbReference type="GeneCards" id="CLIP2"/>
<dbReference type="HGNC" id="HGNC:2586">
    <property type="gene designation" value="CLIP2"/>
</dbReference>
<dbReference type="HPA" id="ENSG00000106665">
    <property type="expression patterns" value="Tissue enriched (brain)"/>
</dbReference>
<dbReference type="MalaCards" id="CLIP2"/>
<dbReference type="MIM" id="603432">
    <property type="type" value="gene"/>
</dbReference>
<dbReference type="neXtProt" id="NX_Q9UDT6"/>
<dbReference type="OpenTargets" id="ENSG00000106665"/>
<dbReference type="Orphanet" id="904">
    <property type="disease" value="Williams syndrome"/>
</dbReference>
<dbReference type="PharmGKB" id="PA27085"/>
<dbReference type="VEuPathDB" id="HostDB:ENSG00000106665"/>
<dbReference type="eggNOG" id="KOG4568">
    <property type="taxonomic scope" value="Eukaryota"/>
</dbReference>
<dbReference type="GeneTree" id="ENSGT00940000159426"/>
<dbReference type="HOGENOM" id="CLU_001753_0_0_1"/>
<dbReference type="InParanoid" id="Q9UDT6"/>
<dbReference type="OMA" id="HMIESSD"/>
<dbReference type="OrthoDB" id="5295208at2759"/>
<dbReference type="PAN-GO" id="Q9UDT6">
    <property type="GO annotations" value="5 GO annotations based on evolutionary models"/>
</dbReference>
<dbReference type="PhylomeDB" id="Q9UDT6"/>
<dbReference type="TreeFam" id="TF326096"/>
<dbReference type="PathwayCommons" id="Q9UDT6"/>
<dbReference type="SignaLink" id="Q9UDT6"/>
<dbReference type="SIGNOR" id="Q9UDT6"/>
<dbReference type="BioGRID-ORCS" id="7461">
    <property type="hits" value="7 hits in 1146 CRISPR screens"/>
</dbReference>
<dbReference type="CD-CODE" id="FB4E32DD">
    <property type="entry name" value="Presynaptic clusters and postsynaptic densities"/>
</dbReference>
<dbReference type="ChiTaRS" id="CLIP2">
    <property type="organism name" value="human"/>
</dbReference>
<dbReference type="EvolutionaryTrace" id="Q9UDT6"/>
<dbReference type="GeneWiki" id="CLIP2"/>
<dbReference type="GenomeRNAi" id="7461"/>
<dbReference type="Pharos" id="Q9UDT6">
    <property type="development level" value="Tbio"/>
</dbReference>
<dbReference type="PRO" id="PR:Q9UDT6"/>
<dbReference type="Proteomes" id="UP000005640">
    <property type="component" value="Chromosome 7"/>
</dbReference>
<dbReference type="RNAct" id="Q9UDT6">
    <property type="molecule type" value="protein"/>
</dbReference>
<dbReference type="Bgee" id="ENSG00000106665">
    <property type="expression patterns" value="Expressed in cortical plate and 152 other cell types or tissues"/>
</dbReference>
<dbReference type="ExpressionAtlas" id="Q9UDT6">
    <property type="expression patterns" value="baseline and differential"/>
</dbReference>
<dbReference type="GO" id="GO:0005938">
    <property type="term" value="C:cell cortex"/>
    <property type="evidence" value="ECO:0000318"/>
    <property type="project" value="GO_Central"/>
</dbReference>
<dbReference type="GO" id="GO:0005875">
    <property type="term" value="C:microtubule associated complex"/>
    <property type="evidence" value="ECO:0000304"/>
    <property type="project" value="ProtInc"/>
</dbReference>
<dbReference type="GO" id="GO:0035371">
    <property type="term" value="C:microtubule plus-end"/>
    <property type="evidence" value="ECO:0000250"/>
    <property type="project" value="UniProtKB"/>
</dbReference>
<dbReference type="GO" id="GO:0005634">
    <property type="term" value="C:nucleus"/>
    <property type="evidence" value="ECO:0000318"/>
    <property type="project" value="GO_Central"/>
</dbReference>
<dbReference type="GO" id="GO:0008017">
    <property type="term" value="F:microtubule binding"/>
    <property type="evidence" value="ECO:0000250"/>
    <property type="project" value="UniProtKB"/>
</dbReference>
<dbReference type="GO" id="GO:0051010">
    <property type="term" value="F:microtubule plus-end binding"/>
    <property type="evidence" value="ECO:0000318"/>
    <property type="project" value="GO_Central"/>
</dbReference>
<dbReference type="GO" id="GO:0031122">
    <property type="term" value="P:cytoplasmic microtubule organization"/>
    <property type="evidence" value="ECO:0000318"/>
    <property type="project" value="GO_Central"/>
</dbReference>
<dbReference type="FunFam" id="2.30.30.190:FF:000002">
    <property type="entry name" value="CAP-Gly domain containing linker protein 1"/>
    <property type="match status" value="1"/>
</dbReference>
<dbReference type="FunFam" id="2.30.30.190:FF:000001">
    <property type="entry name" value="Putative CAP-Gly domain-containing linker protein 1"/>
    <property type="match status" value="1"/>
</dbReference>
<dbReference type="Gene3D" id="2.30.30.190">
    <property type="entry name" value="CAP Gly-rich-like domain"/>
    <property type="match status" value="2"/>
</dbReference>
<dbReference type="InterPro" id="IPR036859">
    <property type="entry name" value="CAP-Gly_dom_sf"/>
</dbReference>
<dbReference type="InterPro" id="IPR000938">
    <property type="entry name" value="CAP-Gly_domain"/>
</dbReference>
<dbReference type="PANTHER" id="PTHR18916:SF10">
    <property type="entry name" value="CAP-GLY DOMAIN-CONTAINING LINKER PROTEIN 2"/>
    <property type="match status" value="1"/>
</dbReference>
<dbReference type="PANTHER" id="PTHR18916">
    <property type="entry name" value="DYNACTIN 1-RELATED MICROTUBULE-BINDING"/>
    <property type="match status" value="1"/>
</dbReference>
<dbReference type="Pfam" id="PF01302">
    <property type="entry name" value="CAP_GLY"/>
    <property type="match status" value="2"/>
</dbReference>
<dbReference type="SMART" id="SM01052">
    <property type="entry name" value="CAP_GLY"/>
    <property type="match status" value="2"/>
</dbReference>
<dbReference type="SUPFAM" id="SSF74924">
    <property type="entry name" value="Cap-Gly domain"/>
    <property type="match status" value="2"/>
</dbReference>
<dbReference type="PROSITE" id="PS00845">
    <property type="entry name" value="CAP_GLY_1"/>
    <property type="match status" value="2"/>
</dbReference>
<dbReference type="PROSITE" id="PS50245">
    <property type="entry name" value="CAP_GLY_2"/>
    <property type="match status" value="2"/>
</dbReference>
<accession>Q9UDT6</accession>
<accession>O14527</accession>
<accession>O43611</accession>
<organism>
    <name type="scientific">Homo sapiens</name>
    <name type="common">Human</name>
    <dbReference type="NCBI Taxonomy" id="9606"/>
    <lineage>
        <taxon>Eukaryota</taxon>
        <taxon>Metazoa</taxon>
        <taxon>Chordata</taxon>
        <taxon>Craniata</taxon>
        <taxon>Vertebrata</taxon>
        <taxon>Euteleostomi</taxon>
        <taxon>Mammalia</taxon>
        <taxon>Eutheria</taxon>
        <taxon>Euarchontoglires</taxon>
        <taxon>Primates</taxon>
        <taxon>Haplorrhini</taxon>
        <taxon>Catarrhini</taxon>
        <taxon>Hominidae</taxon>
        <taxon>Homo</taxon>
    </lineage>
</organism>
<evidence type="ECO:0000250" key="1"/>
<evidence type="ECO:0000250" key="2">
    <source>
        <dbReference type="UniProtKB" id="O55156"/>
    </source>
</evidence>
<evidence type="ECO:0000250" key="3">
    <source>
        <dbReference type="UniProtKB" id="Q9Z0H8"/>
    </source>
</evidence>
<evidence type="ECO:0000255" key="4"/>
<evidence type="ECO:0000255" key="5">
    <source>
        <dbReference type="PROSITE-ProRule" id="PRU00045"/>
    </source>
</evidence>
<evidence type="ECO:0000256" key="6">
    <source>
        <dbReference type="SAM" id="MobiDB-lite"/>
    </source>
</evidence>
<evidence type="ECO:0000269" key="7">
    <source>
    </source>
</evidence>
<evidence type="ECO:0000269" key="8">
    <source>
    </source>
</evidence>
<evidence type="ECO:0000303" key="9">
    <source>
    </source>
</evidence>
<evidence type="ECO:0000305" key="10"/>
<evidence type="ECO:0000305" key="11">
    <source>
    </source>
</evidence>
<evidence type="ECO:0000305" key="12">
    <source>
    </source>
</evidence>
<evidence type="ECO:0007744" key="13">
    <source>
    </source>
</evidence>
<evidence type="ECO:0007829" key="14">
    <source>
        <dbReference type="PDB" id="2CP2"/>
    </source>
</evidence>
<evidence type="ECO:0007829" key="15">
    <source>
        <dbReference type="PDB" id="2CP3"/>
    </source>
</evidence>
<keyword id="KW-0002">3D-structure</keyword>
<keyword id="KW-0025">Alternative splicing</keyword>
<keyword id="KW-0175">Coiled coil</keyword>
<keyword id="KW-0963">Cytoplasm</keyword>
<keyword id="KW-0206">Cytoskeleton</keyword>
<keyword id="KW-0903">Direct protein sequencing</keyword>
<keyword id="KW-0493">Microtubule</keyword>
<keyword id="KW-0597">Phosphoprotein</keyword>
<keyword id="KW-1267">Proteomics identification</keyword>
<keyword id="KW-1185">Reference proteome</keyword>
<keyword id="KW-0677">Repeat</keyword>
<keyword id="KW-0856">Williams-Beuren syndrome</keyword>
<sequence length="1046" mass="115837">MQKPSGLKPPGRGGKHSSPMGRTSTGSASSSAAVAASSKEGSPLHKQSSGPSSSPAAAAAPEKPGPKAAEVGDDFLGDFVVGERVWVNGVKPGVVQYLGETQFAPGQWAGVVLDDPVGKNDGAVGGVRYFECPALQGIFTRPSKLTRQPTAEGSGSDAHSVESLTAQNLSLHSGTATPPLTSRVIPLRESVLNSSVKTGNESGSNLSDSGSVKRGEKDLRLGDRVLVGGTKTGVVRYVGETDFAKGEWCGVELDEPLGKNDGAVAGTRYFQCPPKFGLFAPIHKVIRIGFPSTSPAKAKKTKRMAMGVSALTHSPSSSSISSVSSVASSVGGRPSRSGLLTETSSRYARKISGTTALQEALKEKQQHIEQLLAERDLERAEVAKATSHICEVEKEIALLKAQHEQYVAEAEEKLQRARLLVESVRKEKVDLSNQLEEERRKVEDLQFRVEEESITKGDLETQTQLEHARIGELEQSLLLEKAQAERLLRELADNRLTTVAEKSRVLQLEEELTLRRGEIEELQQCLLHSGPPPPDHPDAAEILRLRERLLSASKEHQRESGVLRDKYEKALKAYQAEVDKLRAANEKYAQEVAGLKDKVQQATSENMGLMDNWKSKLDSLASDHQKSLEDLKATLNSGPGAQQKEIGELKAVMEGIKMEHQLELGNLQAKHDLETAMHVKEKEALREKLQEAQEELAGLQRHWRAQLEVQASQHRLELQEAQDQRRDAELRVHELEKLDVEYRGQAQAIEFLKEQISLAEKKMLDYERLQRAEAQGKQEVESLREKLLVAENRLQAVEALCSSQHTHMIESNDISEETIRTKETVEGLQDKLNKRDKEVTALTSQTEMLRAQVSALESKCKSGEKKVDALLKEKRRLEAELETVSRKTHDASGQLVLISQELLRKERSLNELRVLLLEANRHSPGPERDLSREVHKAEWRIKEQKLKDDIRGLREKLTGLDKEKSLSDQRRYSLIDRSSAPELLRLQHQLMSTEDALRDALDQAQQVEKLMEAMRSCPDKAQTIGNSGSANGIHQQDKAQKQEDKH</sequence>
<gene>
    <name type="primary">CLIP2</name>
    <name type="synonym">CYLN2</name>
    <name type="synonym">KIAA0291</name>
    <name type="synonym">WBSCR3</name>
    <name type="synonym">WBSCR4</name>
    <name type="synonym">WSCR4</name>
</gene>
<name>CLIP2_HUMAN</name>
<reference key="1">
    <citation type="journal article" date="1997" name="DNA Res.">
        <title>Construction and characterization of human brain cDNA libraries suitable for analysis of cDNA clones encoding relatively large proteins.</title>
        <authorList>
            <person name="Ohara O."/>
            <person name="Nagase T."/>
            <person name="Ishikawa K."/>
            <person name="Nakajima D."/>
            <person name="Ohira M."/>
            <person name="Seki N."/>
            <person name="Nomura N."/>
        </authorList>
    </citation>
    <scope>NUCLEOTIDE SEQUENCE [LARGE SCALE MRNA] (ISOFORM 2)</scope>
    <scope>VARIANT PRO-977</scope>
    <source>
        <tissue>Brain</tissue>
    </source>
</reference>
<reference key="2">
    <citation type="journal article" date="2002" name="DNA Res.">
        <title>Construction of expression-ready cDNA clones for KIAA genes: manual curation of 330 KIAA cDNA clones.</title>
        <authorList>
            <person name="Nakajima D."/>
            <person name="Okazaki N."/>
            <person name="Yamakawa H."/>
            <person name="Kikuno R."/>
            <person name="Ohara O."/>
            <person name="Nagase T."/>
        </authorList>
    </citation>
    <scope>SEQUENCE REVISION</scope>
</reference>
<reference key="3">
    <citation type="journal article" date="2003" name="Nature">
        <title>The DNA sequence of human chromosome 7.</title>
        <authorList>
            <person name="Hillier L.W."/>
            <person name="Fulton R.S."/>
            <person name="Fulton L.A."/>
            <person name="Graves T.A."/>
            <person name="Pepin K.H."/>
            <person name="Wagner-McPherson C."/>
            <person name="Layman D."/>
            <person name="Maas J."/>
            <person name="Jaeger S."/>
            <person name="Walker R."/>
            <person name="Wylie K."/>
            <person name="Sekhon M."/>
            <person name="Becker M.C."/>
            <person name="O'Laughlin M.D."/>
            <person name="Schaller M.E."/>
            <person name="Fewell G.A."/>
            <person name="Delehaunty K.D."/>
            <person name="Miner T.L."/>
            <person name="Nash W.E."/>
            <person name="Cordes M."/>
            <person name="Du H."/>
            <person name="Sun H."/>
            <person name="Edwards J."/>
            <person name="Bradshaw-Cordum H."/>
            <person name="Ali J."/>
            <person name="Andrews S."/>
            <person name="Isak A."/>
            <person name="Vanbrunt A."/>
            <person name="Nguyen C."/>
            <person name="Du F."/>
            <person name="Lamar B."/>
            <person name="Courtney L."/>
            <person name="Kalicki J."/>
            <person name="Ozersky P."/>
            <person name="Bielicki L."/>
            <person name="Scott K."/>
            <person name="Holmes A."/>
            <person name="Harkins R."/>
            <person name="Harris A."/>
            <person name="Strong C.M."/>
            <person name="Hou S."/>
            <person name="Tomlinson C."/>
            <person name="Dauphin-Kohlberg S."/>
            <person name="Kozlowicz-Reilly A."/>
            <person name="Leonard S."/>
            <person name="Rohlfing T."/>
            <person name="Rock S.M."/>
            <person name="Tin-Wollam A.-M."/>
            <person name="Abbott A."/>
            <person name="Minx P."/>
            <person name="Maupin R."/>
            <person name="Strowmatt C."/>
            <person name="Latreille P."/>
            <person name="Miller N."/>
            <person name="Johnson D."/>
            <person name="Murray J."/>
            <person name="Woessner J.P."/>
            <person name="Wendl M.C."/>
            <person name="Yang S.-P."/>
            <person name="Schultz B.R."/>
            <person name="Wallis J.W."/>
            <person name="Spieth J."/>
            <person name="Bieri T.A."/>
            <person name="Nelson J.O."/>
            <person name="Berkowicz N."/>
            <person name="Wohldmann P.E."/>
            <person name="Cook L.L."/>
            <person name="Hickenbotham M.T."/>
            <person name="Eldred J."/>
            <person name="Williams D."/>
            <person name="Bedell J.A."/>
            <person name="Mardis E.R."/>
            <person name="Clifton S.W."/>
            <person name="Chissoe S.L."/>
            <person name="Marra M.A."/>
            <person name="Raymond C."/>
            <person name="Haugen E."/>
            <person name="Gillett W."/>
            <person name="Zhou Y."/>
            <person name="James R."/>
            <person name="Phelps K."/>
            <person name="Iadanoto S."/>
            <person name="Bubb K."/>
            <person name="Simms E."/>
            <person name="Levy R."/>
            <person name="Clendenning J."/>
            <person name="Kaul R."/>
            <person name="Kent W.J."/>
            <person name="Furey T.S."/>
            <person name="Baertsch R.A."/>
            <person name="Brent M.R."/>
            <person name="Keibler E."/>
            <person name="Flicek P."/>
            <person name="Bork P."/>
            <person name="Suyama M."/>
            <person name="Bailey J.A."/>
            <person name="Portnoy M.E."/>
            <person name="Torrents D."/>
            <person name="Chinwalla A.T."/>
            <person name="Gish W.R."/>
            <person name="Eddy S.R."/>
            <person name="McPherson J.D."/>
            <person name="Olson M.V."/>
            <person name="Eichler E.E."/>
            <person name="Green E.D."/>
            <person name="Waterston R.H."/>
            <person name="Wilson R.K."/>
        </authorList>
    </citation>
    <scope>NUCLEOTIDE SEQUENCE [LARGE SCALE GENOMIC DNA]</scope>
</reference>
<reference key="4">
    <citation type="journal article" date="1996" name="Genomics">
        <title>Identification of genes from a 500-kb region at 7q11.23 that is commonly deleted in Williams syndrome patients.</title>
        <authorList>
            <person name="Osborne L.R."/>
            <person name="Martindale D.W."/>
            <person name="Scherer S.W."/>
            <person name="Shi X.-M."/>
            <person name="Huizenga J."/>
            <person name="Heng H.H.Q."/>
            <person name="Costa T."/>
            <person name="Pober B."/>
            <person name="Lew L."/>
            <person name="Brinkman J."/>
            <person name="Rommens J."/>
            <person name="Koop B.F."/>
            <person name="Tsui L.-C."/>
        </authorList>
    </citation>
    <scope>NUCLEOTIDE SEQUENCE [GENOMIC DNA] OF 42-460</scope>
</reference>
<reference key="5">
    <citation type="submission" date="2008-12" db="UniProtKB">
        <authorList>
            <person name="Lubec G."/>
            <person name="Chen W.-Q."/>
            <person name="Sun Y."/>
        </authorList>
    </citation>
    <scope>PROTEIN SEQUENCE OF 350-362 AND 689-701</scope>
    <scope>IDENTIFICATION BY MASS SPECTROMETRY</scope>
    <source>
        <tissue>Fetal brain cortex</tissue>
    </source>
</reference>
<reference key="6">
    <citation type="journal article" date="1998" name="Genomics">
        <title>The murine CYLN2 gene: genomic organization, chromosome localization, and comparison to the human gene that is located within the 7q11.23 Williams syndrome critical region.</title>
        <authorList>
            <person name="Hoogenraad C.C."/>
            <person name="Eussen B.H.J."/>
            <person name="Langeveld A."/>
            <person name="van Haperen R."/>
            <person name="Winterberg S."/>
            <person name="Wouters C.H."/>
            <person name="Grosveld F."/>
            <person name="de Zeeuw C.I."/>
            <person name="Galjart N."/>
        </authorList>
    </citation>
    <scope>GENE STRUCTURE</scope>
</reference>
<reference key="7">
    <citation type="journal article" date="2001" name="Cell">
        <title>Clasps are CLIP-115 and -170 associating proteins involved in the regional regulation of microtubule dynamics in motile fibroblasts.</title>
        <authorList>
            <person name="Akhmanova A."/>
            <person name="Hoogenraad C.C."/>
            <person name="Drabek K."/>
            <person name="Stepanova T."/>
            <person name="Dortland B."/>
            <person name="Verkerk T."/>
            <person name="Vermeulen W."/>
            <person name="Burgering B.M."/>
            <person name="de Zeeuw C.I."/>
            <person name="Grosveld F."/>
            <person name="Galjart N."/>
        </authorList>
    </citation>
    <scope>INTERACTION WITH CLASP1 AND CLASP2</scope>
</reference>
<reference key="8">
    <citation type="journal article" date="2008" name="J. Proteome Res.">
        <title>Phosphoproteome of resting human platelets.</title>
        <authorList>
            <person name="Zahedi R.P."/>
            <person name="Lewandrowski U."/>
            <person name="Wiesner J."/>
            <person name="Wortelkamp S."/>
            <person name="Moebius J."/>
            <person name="Schuetz C."/>
            <person name="Walter U."/>
            <person name="Gambaryan S."/>
            <person name="Sickmann A."/>
        </authorList>
    </citation>
    <scope>IDENTIFICATION BY MASS SPECTROMETRY [LARGE SCALE ANALYSIS]</scope>
    <source>
        <tissue>Platelet</tissue>
    </source>
</reference>
<reference key="9">
    <citation type="journal article" date="2011" name="BMC Syst. Biol.">
        <title>Initial characterization of the human central proteome.</title>
        <authorList>
            <person name="Burkard T.R."/>
            <person name="Planyavsky M."/>
            <person name="Kaupe I."/>
            <person name="Breitwieser F.P."/>
            <person name="Buerckstuemmer T."/>
            <person name="Bennett K.L."/>
            <person name="Superti-Furga G."/>
            <person name="Colinge J."/>
        </authorList>
    </citation>
    <scope>IDENTIFICATION BY MASS SPECTROMETRY [LARGE SCALE ANALYSIS]</scope>
</reference>
<reference key="10">
    <citation type="journal article" date="2012" name="Am. J. Hum. Genet.">
        <title>The contribution of CLIP2 haploinsufficiency to the clinical manifestations of the Williams-Beuren syndrome.</title>
        <authorList>
            <person name="Vandeweyer G."/>
            <person name="Van der Aa N."/>
            <person name="Reyniers E."/>
            <person name="Kooy R.F."/>
        </authorList>
    </citation>
    <scope>INVOLVEMENT IN WBS</scope>
</reference>
<reference key="11">
    <citation type="journal article" date="2013" name="J. Proteome Res.">
        <title>Toward a comprehensive characterization of a human cancer cell phosphoproteome.</title>
        <authorList>
            <person name="Zhou H."/>
            <person name="Di Palma S."/>
            <person name="Preisinger C."/>
            <person name="Peng M."/>
            <person name="Polat A.N."/>
            <person name="Heck A.J."/>
            <person name="Mohammed S."/>
        </authorList>
    </citation>
    <scope>PHOSPHORYLATION [LARGE SCALE ANALYSIS] AT SER-923</scope>
    <scope>IDENTIFICATION BY MASS SPECTROMETRY [LARGE SCALE ANALYSIS]</scope>
    <source>
        <tissue>Cervix carcinoma</tissue>
        <tissue>Erythroleukemia</tissue>
    </source>
</reference>
<reference key="12">
    <citation type="journal article" date="2014" name="J. Proteomics">
        <title>An enzyme assisted RP-RPLC approach for in-depth analysis of human liver phosphoproteome.</title>
        <authorList>
            <person name="Bian Y."/>
            <person name="Song C."/>
            <person name="Cheng K."/>
            <person name="Dong M."/>
            <person name="Wang F."/>
            <person name="Huang J."/>
            <person name="Sun D."/>
            <person name="Wang L."/>
            <person name="Ye M."/>
            <person name="Zou H."/>
        </authorList>
    </citation>
    <scope>IDENTIFICATION BY MASS SPECTROMETRY [LARGE SCALE ANALYSIS]</scope>
    <source>
        <tissue>Liver</tissue>
    </source>
</reference>
<reference key="13">
    <citation type="submission" date="2005-11" db="PDB data bank">
        <title>Solution structure of the 1st and 2nd CAP-Gly domain in human CLIP-115/CYLN2.</title>
        <authorList>
            <consortium name="RIKEN structural genomics initiative (RSGI)"/>
        </authorList>
    </citation>
    <scope>STRUCTURE BY NMR OF 68-149 AND 219-289</scope>
</reference>
<proteinExistence type="evidence at protein level"/>
<feature type="chain" id="PRO_0000083515" description="CAP-Gly domain-containing linker protein 2">
    <location>
        <begin position="1"/>
        <end position="1046"/>
    </location>
</feature>
<feature type="domain" description="CAP-Gly 1" evidence="5">
    <location>
        <begin position="99"/>
        <end position="141"/>
    </location>
</feature>
<feature type="domain" description="CAP-Gly 2" evidence="5">
    <location>
        <begin position="239"/>
        <end position="281"/>
    </location>
</feature>
<feature type="region of interest" description="Disordered" evidence="6">
    <location>
        <begin position="1"/>
        <end position="71"/>
    </location>
</feature>
<feature type="region of interest" description="Disordered" evidence="6">
    <location>
        <begin position="143"/>
        <end position="162"/>
    </location>
</feature>
<feature type="region of interest" description="Disordered" evidence="6">
    <location>
        <begin position="195"/>
        <end position="215"/>
    </location>
</feature>
<feature type="region of interest" description="Disordered" evidence="6">
    <location>
        <begin position="313"/>
        <end position="339"/>
    </location>
</feature>
<feature type="region of interest" description="Disordered" evidence="6">
    <location>
        <begin position="1018"/>
        <end position="1046"/>
    </location>
</feature>
<feature type="coiled-coil region" evidence="4">
    <location>
        <begin position="354"/>
        <end position="524"/>
    </location>
</feature>
<feature type="coiled-coil region" evidence="4">
    <location>
        <begin position="561"/>
        <end position="636"/>
    </location>
</feature>
<feature type="coiled-coil region" evidence="4">
    <location>
        <begin position="673"/>
        <end position="1016"/>
    </location>
</feature>
<feature type="compositionally biased region" description="Low complexity" evidence="6">
    <location>
        <begin position="27"/>
        <end position="38"/>
    </location>
</feature>
<feature type="compositionally biased region" description="Low complexity" evidence="6">
    <location>
        <begin position="48"/>
        <end position="69"/>
    </location>
</feature>
<feature type="compositionally biased region" description="Polar residues" evidence="6">
    <location>
        <begin position="143"/>
        <end position="153"/>
    </location>
</feature>
<feature type="compositionally biased region" description="Polar residues" evidence="6">
    <location>
        <begin position="195"/>
        <end position="210"/>
    </location>
</feature>
<feature type="compositionally biased region" description="Low complexity" evidence="6">
    <location>
        <begin position="314"/>
        <end position="338"/>
    </location>
</feature>
<feature type="compositionally biased region" description="Polar residues" evidence="6">
    <location>
        <begin position="1023"/>
        <end position="1034"/>
    </location>
</feature>
<feature type="compositionally biased region" description="Basic and acidic residues" evidence="6">
    <location>
        <begin position="1035"/>
        <end position="1046"/>
    </location>
</feature>
<feature type="modified residue" description="Phosphoserine" evidence="3">
    <location>
        <position position="49"/>
    </location>
</feature>
<feature type="modified residue" description="Phosphoserine" evidence="2">
    <location>
        <position position="202"/>
    </location>
</feature>
<feature type="modified residue" description="Phosphoserine" evidence="3">
    <location>
        <position position="207"/>
    </location>
</feature>
<feature type="modified residue" description="Phosphoserine" evidence="3">
    <location>
        <position position="211"/>
    </location>
</feature>
<feature type="modified residue" description="Phosphoserine" evidence="3">
    <location>
        <position position="314"/>
    </location>
</feature>
<feature type="modified residue" description="Phosphoserine" evidence="13">
    <location>
        <position position="923"/>
    </location>
</feature>
<feature type="modified residue" description="Phosphoserine" evidence="3">
    <location>
        <position position="973"/>
    </location>
</feature>
<feature type="modified residue" description="Phosphoserine" evidence="3">
    <location>
        <position position="979"/>
    </location>
</feature>
<feature type="splice variant" id="VSP_015682" description="In isoform 2." evidence="9">
    <location>
        <begin position="461"/>
        <end position="495"/>
    </location>
</feature>
<feature type="sequence variant" id="VAR_055636" description="In dbSNP:rs17145468.">
    <original>D</original>
    <variation>E</variation>
    <location>
        <position position="961"/>
    </location>
</feature>
<feature type="sequence variant" id="VAR_023618" description="In dbSNP:rs2522943." evidence="8">
    <original>R</original>
    <variation>P</variation>
    <location>
        <position position="977"/>
    </location>
</feature>
<feature type="strand" evidence="14">
    <location>
        <begin position="73"/>
        <end position="75"/>
    </location>
</feature>
<feature type="strand" evidence="14">
    <location>
        <begin position="84"/>
        <end position="86"/>
    </location>
</feature>
<feature type="helix" evidence="14">
    <location>
        <begin position="87"/>
        <end position="89"/>
    </location>
</feature>
<feature type="strand" evidence="14">
    <location>
        <begin position="92"/>
        <end position="100"/>
    </location>
</feature>
<feature type="strand" evidence="14">
    <location>
        <begin position="102"/>
        <end position="104"/>
    </location>
</feature>
<feature type="strand" evidence="14">
    <location>
        <begin position="106"/>
        <end position="116"/>
    </location>
</feature>
<feature type="strand" evidence="14">
    <location>
        <begin position="118"/>
        <end position="124"/>
    </location>
</feature>
<feature type="turn" evidence="14">
    <location>
        <begin position="134"/>
        <end position="136"/>
    </location>
</feature>
<feature type="strand" evidence="14">
    <location>
        <begin position="137"/>
        <end position="140"/>
    </location>
</feature>
<feature type="helix" evidence="14">
    <location>
        <begin position="142"/>
        <end position="144"/>
    </location>
</feature>
<feature type="strand" evidence="15">
    <location>
        <begin position="224"/>
        <end position="227"/>
    </location>
</feature>
<feature type="turn" evidence="15">
    <location>
        <begin position="228"/>
        <end position="230"/>
    </location>
</feature>
<feature type="strand" evidence="15">
    <location>
        <begin position="231"/>
        <end position="240"/>
    </location>
</feature>
<feature type="strand" evidence="15">
    <location>
        <begin position="242"/>
        <end position="256"/>
    </location>
</feature>
<feature type="strand" evidence="15">
    <location>
        <begin position="259"/>
        <end position="264"/>
    </location>
</feature>
<feature type="strand" evidence="15">
    <location>
        <begin position="267"/>
        <end position="270"/>
    </location>
</feature>
<feature type="turn" evidence="15">
    <location>
        <begin position="274"/>
        <end position="276"/>
    </location>
</feature>
<feature type="strand" evidence="15">
    <location>
        <begin position="277"/>
        <end position="281"/>
    </location>
</feature>
<feature type="helix" evidence="15">
    <location>
        <begin position="282"/>
        <end position="284"/>
    </location>
</feature>
<feature type="strand" evidence="15">
    <location>
        <begin position="285"/>
        <end position="287"/>
    </location>
</feature>